<dbReference type="GO" id="GO:0005576">
    <property type="term" value="C:extracellular region"/>
    <property type="evidence" value="ECO:0007669"/>
    <property type="project" value="UniProtKB-SubCell"/>
</dbReference>
<dbReference type="GO" id="GO:0016020">
    <property type="term" value="C:membrane"/>
    <property type="evidence" value="ECO:0007669"/>
    <property type="project" value="UniProtKB-KW"/>
</dbReference>
<dbReference type="GO" id="GO:0044218">
    <property type="term" value="C:other organism cell membrane"/>
    <property type="evidence" value="ECO:0007669"/>
    <property type="project" value="UniProtKB-KW"/>
</dbReference>
<dbReference type="GO" id="GO:0090729">
    <property type="term" value="F:toxin activity"/>
    <property type="evidence" value="ECO:0007669"/>
    <property type="project" value="UniProtKB-KW"/>
</dbReference>
<dbReference type="GO" id="GO:0042742">
    <property type="term" value="P:defense response to bacterium"/>
    <property type="evidence" value="ECO:0007669"/>
    <property type="project" value="UniProtKB-KW"/>
</dbReference>
<dbReference type="GO" id="GO:0050832">
    <property type="term" value="P:defense response to fungus"/>
    <property type="evidence" value="ECO:0007669"/>
    <property type="project" value="UniProtKB-KW"/>
</dbReference>
<dbReference type="GO" id="GO:0045087">
    <property type="term" value="P:innate immune response"/>
    <property type="evidence" value="ECO:0007669"/>
    <property type="project" value="UniProtKB-KW"/>
</dbReference>
<dbReference type="GO" id="GO:0031640">
    <property type="term" value="P:killing of cells of another organism"/>
    <property type="evidence" value="ECO:0007669"/>
    <property type="project" value="UniProtKB-KW"/>
</dbReference>
<keyword id="KW-0027">Amidation</keyword>
<keyword id="KW-0044">Antibiotic</keyword>
<keyword id="KW-0929">Antimicrobial</keyword>
<keyword id="KW-0204">Cytolysis</keyword>
<keyword id="KW-0903">Direct protein sequencing</keyword>
<keyword id="KW-0295">Fungicide</keyword>
<keyword id="KW-1213">G-protein coupled receptor impairing toxin</keyword>
<keyword id="KW-0391">Immunity</keyword>
<keyword id="KW-0399">Innate immunity</keyword>
<keyword id="KW-0467">Mast cell degranulation</keyword>
<keyword id="KW-0472">Membrane</keyword>
<keyword id="KW-0964">Secreted</keyword>
<keyword id="KW-1052">Target cell membrane</keyword>
<keyword id="KW-1053">Target membrane</keyword>
<keyword id="KW-0800">Toxin</keyword>
<proteinExistence type="evidence at protein level"/>
<evidence type="ECO:0000250" key="1">
    <source>
        <dbReference type="UniProtKB" id="P01514"/>
    </source>
</evidence>
<evidence type="ECO:0000250" key="2">
    <source>
        <dbReference type="UniProtKB" id="P84914"/>
    </source>
</evidence>
<evidence type="ECO:0000269" key="3">
    <source>
    </source>
</evidence>
<evidence type="ECO:0000303" key="4">
    <source>
    </source>
</evidence>
<evidence type="ECO:0000305" key="5"/>
<evidence type="ECO:0000305" key="6">
    <source>
    </source>
</evidence>
<comment type="function">
    <text evidence="1 2 3">Linear cationic alpha-helical peptide with antimicrobial activities against both Gram-positive and Gram-negative strains and against the yeast C.albicans. Shows moderate mast cell degranulation and leishmanicidal activities. Has a very low hemolytic activity (PubMed:21549739). Its mast cell degranulation activity may be related to the activation of G-protein coupled receptors in mast cells as well as interaction with other proteins located in cell endosomal membranes in the mast cells (By similarity).</text>
</comment>
<comment type="subcellular location">
    <subcellularLocation>
        <location evidence="3">Secreted</location>
    </subcellularLocation>
    <subcellularLocation>
        <location evidence="3">Target cell membrane</location>
    </subcellularLocation>
    <text evidence="6">Assumes an amphipathic alpha-helical conformation in a lipid environment.</text>
</comment>
<comment type="tissue specificity">
    <text evidence="6">Expressed by the venom gland.</text>
</comment>
<comment type="mass spectrometry"/>
<comment type="similarity">
    <text evidence="5">Belongs to the MCD family. Mastoparan subfamily.</text>
</comment>
<reference key="1">
    <citation type="journal article" date="2011" name="Toxicon">
        <title>Chemical and biological characterization of four new linear cationic alpha-helical peptides from the venoms of two solitary eumenine wasps.</title>
        <authorList>
            <person name="Rangel M."/>
            <person name="Dos Santos Cabrera M.P."/>
            <person name="Kazuma K."/>
            <person name="Ando K."/>
            <person name="Wang X."/>
            <person name="Kato M."/>
            <person name="Nihei K.I."/>
            <person name="Hirata I.Y."/>
            <person name="Cross T.J."/>
            <person name="Garcia A.N."/>
            <person name="Faquim-Mauro E.L."/>
            <person name="Franzolin M.R."/>
            <person name="Fuchino H."/>
            <person name="Mori-Yasumoto K."/>
            <person name="Sekita S."/>
            <person name="Kadowaki M."/>
            <person name="Satake M."/>
            <person name="Konno K."/>
        </authorList>
    </citation>
    <scope>PROTEIN SEQUENCE</scope>
    <scope>SYNTHESIS</scope>
    <scope>FUNCTION</scope>
    <scope>SUBCELLULAR LOCATION</scope>
    <scope>MASS SPECTROMETRY</scope>
    <scope>CIRCULAR DICHROISM</scope>
    <scope>AMIDATION AT LEU-14</scope>
    <source>
        <tissue>Venom</tissue>
    </source>
</reference>
<reference key="2">
    <citation type="journal article" date="2016" name="Toxins">
        <title>Peptide toxins in solitary wasp venoms.</title>
        <authorList>
            <person name="Konno K."/>
            <person name="Kazuma K."/>
            <person name="Nihei K."/>
        </authorList>
    </citation>
    <scope>REVIEW</scope>
</reference>
<sequence>FDIMGLIKKVAGAL</sequence>
<name>MASTE_EUMRB</name>
<protein>
    <recommendedName>
        <fullName evidence="4">Eumenine mastoparan-ER</fullName>
        <shortName evidence="4">EMP-ER</shortName>
    </recommendedName>
</protein>
<accession>P0CJ38</accession>
<organism>
    <name type="scientific">Eumenes rubrofemoratus</name>
    <name type="common">Solitary wasp</name>
    <dbReference type="NCBI Taxonomy" id="1035770"/>
    <lineage>
        <taxon>Eukaryota</taxon>
        <taxon>Metazoa</taxon>
        <taxon>Ecdysozoa</taxon>
        <taxon>Arthropoda</taxon>
        <taxon>Hexapoda</taxon>
        <taxon>Insecta</taxon>
        <taxon>Pterygota</taxon>
        <taxon>Neoptera</taxon>
        <taxon>Endopterygota</taxon>
        <taxon>Hymenoptera</taxon>
        <taxon>Apocrita</taxon>
        <taxon>Aculeata</taxon>
        <taxon>Vespoidea</taxon>
        <taxon>Vespidae</taxon>
        <taxon>Eumeninae</taxon>
        <taxon>Eumenes</taxon>
    </lineage>
</organism>
<feature type="peptide" id="PRO_0000411089" description="Eumenine mastoparan-ER" evidence="3">
    <location>
        <begin position="1"/>
        <end position="14"/>
    </location>
</feature>
<feature type="modified residue" description="Leucine amide" evidence="3">
    <location>
        <position position="14"/>
    </location>
</feature>